<evidence type="ECO:0000255" key="1">
    <source>
        <dbReference type="HAMAP-Rule" id="MF_00367"/>
    </source>
</evidence>
<evidence type="ECO:0000255" key="2">
    <source>
        <dbReference type="PROSITE-ProRule" id="PRU01050"/>
    </source>
</evidence>
<feature type="chain" id="PRO_1000079708" description="GTPase Era">
    <location>
        <begin position="1"/>
        <end position="314"/>
    </location>
</feature>
<feature type="domain" description="Era-type G" evidence="2">
    <location>
        <begin position="7"/>
        <end position="188"/>
    </location>
</feature>
<feature type="domain" description="KH type-2" evidence="1">
    <location>
        <begin position="219"/>
        <end position="296"/>
    </location>
</feature>
<feature type="region of interest" description="G1" evidence="2">
    <location>
        <begin position="15"/>
        <end position="22"/>
    </location>
</feature>
<feature type="region of interest" description="G2" evidence="2">
    <location>
        <begin position="41"/>
        <end position="45"/>
    </location>
</feature>
<feature type="region of interest" description="G3" evidence="2">
    <location>
        <begin position="62"/>
        <end position="65"/>
    </location>
</feature>
<feature type="region of interest" description="G4" evidence="2">
    <location>
        <begin position="138"/>
        <end position="141"/>
    </location>
</feature>
<feature type="region of interest" description="G5" evidence="2">
    <location>
        <begin position="167"/>
        <end position="169"/>
    </location>
</feature>
<feature type="binding site" evidence="1">
    <location>
        <begin position="15"/>
        <end position="22"/>
    </location>
    <ligand>
        <name>GTP</name>
        <dbReference type="ChEBI" id="CHEBI:37565"/>
    </ligand>
</feature>
<feature type="binding site" evidence="1">
    <location>
        <begin position="62"/>
        <end position="66"/>
    </location>
    <ligand>
        <name>GTP</name>
        <dbReference type="ChEBI" id="CHEBI:37565"/>
    </ligand>
</feature>
<feature type="binding site" evidence="1">
    <location>
        <begin position="138"/>
        <end position="141"/>
    </location>
    <ligand>
        <name>GTP</name>
        <dbReference type="ChEBI" id="CHEBI:37565"/>
    </ligand>
</feature>
<reference key="1">
    <citation type="submission" date="2006-08" db="EMBL/GenBank/DDBJ databases">
        <title>Complete sequence of Maricaulis maris MCS10.</title>
        <authorList>
            <consortium name="US DOE Joint Genome Institute"/>
            <person name="Copeland A."/>
            <person name="Lucas S."/>
            <person name="Lapidus A."/>
            <person name="Barry K."/>
            <person name="Detter J.C."/>
            <person name="Glavina del Rio T."/>
            <person name="Hammon N."/>
            <person name="Israni S."/>
            <person name="Dalin E."/>
            <person name="Tice H."/>
            <person name="Pitluck S."/>
            <person name="Saunders E."/>
            <person name="Brettin T."/>
            <person name="Bruce D."/>
            <person name="Han C."/>
            <person name="Tapia R."/>
            <person name="Gilna P."/>
            <person name="Schmutz J."/>
            <person name="Larimer F."/>
            <person name="Land M."/>
            <person name="Hauser L."/>
            <person name="Kyrpides N."/>
            <person name="Mikhailova N."/>
            <person name="Viollier P."/>
            <person name="Stephens C."/>
            <person name="Richardson P."/>
        </authorList>
    </citation>
    <scope>NUCLEOTIDE SEQUENCE [LARGE SCALE GENOMIC DNA]</scope>
    <source>
        <strain>MCS10</strain>
    </source>
</reference>
<accession>Q0APC5</accession>
<name>ERA_MARMM</name>
<sequence length="314" mass="34357">MSDTPKRCGFAAVIGSPNAGKSTLVNALVGEKVTIVTHKVQTTRFAVRGVALAGETQIVLVDTPGVFAPKTRLDKSMVAAAWSGAGEADTIMHVVDAGARARMEHGGAKSGDSRMVEDDDRVTEGLKKTEQKAILVLNKVDLMPRDQLLAMSQELYETGVYSEVFMISAKTGSGVPQLREFIAGLMPEGVWHYPADQVADLPARILAAEITREKVYLRLHEELPYASMVETEVWKKLRDGSLRIEQSIIVERETQKPIVLGKGGSAVKSIGEASRKELEEVLGCKVHLFLNVKVDAKWMARRSHYKDVGLDFDV</sequence>
<gene>
    <name evidence="1" type="primary">era</name>
    <name type="ordered locus">Mmar10_1570</name>
</gene>
<protein>
    <recommendedName>
        <fullName evidence="1">GTPase Era</fullName>
    </recommendedName>
</protein>
<dbReference type="EMBL" id="CP000449">
    <property type="protein sequence ID" value="ABI65862.1"/>
    <property type="molecule type" value="Genomic_DNA"/>
</dbReference>
<dbReference type="RefSeq" id="WP_011643509.1">
    <property type="nucleotide sequence ID" value="NC_008347.1"/>
</dbReference>
<dbReference type="SMR" id="Q0APC5"/>
<dbReference type="STRING" id="394221.Mmar10_1570"/>
<dbReference type="KEGG" id="mmr:Mmar10_1570"/>
<dbReference type="eggNOG" id="COG1159">
    <property type="taxonomic scope" value="Bacteria"/>
</dbReference>
<dbReference type="HOGENOM" id="CLU_038009_1_1_5"/>
<dbReference type="OrthoDB" id="9805918at2"/>
<dbReference type="Proteomes" id="UP000001964">
    <property type="component" value="Chromosome"/>
</dbReference>
<dbReference type="GO" id="GO:0005829">
    <property type="term" value="C:cytosol"/>
    <property type="evidence" value="ECO:0007669"/>
    <property type="project" value="TreeGrafter"/>
</dbReference>
<dbReference type="GO" id="GO:0005886">
    <property type="term" value="C:plasma membrane"/>
    <property type="evidence" value="ECO:0007669"/>
    <property type="project" value="UniProtKB-SubCell"/>
</dbReference>
<dbReference type="GO" id="GO:0005525">
    <property type="term" value="F:GTP binding"/>
    <property type="evidence" value="ECO:0007669"/>
    <property type="project" value="UniProtKB-UniRule"/>
</dbReference>
<dbReference type="GO" id="GO:0003924">
    <property type="term" value="F:GTPase activity"/>
    <property type="evidence" value="ECO:0007669"/>
    <property type="project" value="UniProtKB-UniRule"/>
</dbReference>
<dbReference type="GO" id="GO:0043024">
    <property type="term" value="F:ribosomal small subunit binding"/>
    <property type="evidence" value="ECO:0007669"/>
    <property type="project" value="TreeGrafter"/>
</dbReference>
<dbReference type="GO" id="GO:0070181">
    <property type="term" value="F:small ribosomal subunit rRNA binding"/>
    <property type="evidence" value="ECO:0007669"/>
    <property type="project" value="UniProtKB-UniRule"/>
</dbReference>
<dbReference type="GO" id="GO:0000028">
    <property type="term" value="P:ribosomal small subunit assembly"/>
    <property type="evidence" value="ECO:0007669"/>
    <property type="project" value="TreeGrafter"/>
</dbReference>
<dbReference type="CDD" id="cd04163">
    <property type="entry name" value="Era"/>
    <property type="match status" value="1"/>
</dbReference>
<dbReference type="CDD" id="cd22534">
    <property type="entry name" value="KH-II_Era"/>
    <property type="match status" value="1"/>
</dbReference>
<dbReference type="Gene3D" id="3.30.300.20">
    <property type="match status" value="1"/>
</dbReference>
<dbReference type="Gene3D" id="3.40.50.300">
    <property type="entry name" value="P-loop containing nucleotide triphosphate hydrolases"/>
    <property type="match status" value="1"/>
</dbReference>
<dbReference type="HAMAP" id="MF_00367">
    <property type="entry name" value="GTPase_Era"/>
    <property type="match status" value="1"/>
</dbReference>
<dbReference type="InterPro" id="IPR030388">
    <property type="entry name" value="G_ERA_dom"/>
</dbReference>
<dbReference type="InterPro" id="IPR006073">
    <property type="entry name" value="GTP-bd"/>
</dbReference>
<dbReference type="InterPro" id="IPR005662">
    <property type="entry name" value="GTPase_Era-like"/>
</dbReference>
<dbReference type="InterPro" id="IPR015946">
    <property type="entry name" value="KH_dom-like_a/b"/>
</dbReference>
<dbReference type="InterPro" id="IPR004044">
    <property type="entry name" value="KH_dom_type_2"/>
</dbReference>
<dbReference type="InterPro" id="IPR009019">
    <property type="entry name" value="KH_sf_prok-type"/>
</dbReference>
<dbReference type="InterPro" id="IPR027417">
    <property type="entry name" value="P-loop_NTPase"/>
</dbReference>
<dbReference type="InterPro" id="IPR005225">
    <property type="entry name" value="Small_GTP-bd"/>
</dbReference>
<dbReference type="NCBIfam" id="TIGR00436">
    <property type="entry name" value="era"/>
    <property type="match status" value="1"/>
</dbReference>
<dbReference type="NCBIfam" id="NF000908">
    <property type="entry name" value="PRK00089.1"/>
    <property type="match status" value="1"/>
</dbReference>
<dbReference type="NCBIfam" id="TIGR00231">
    <property type="entry name" value="small_GTP"/>
    <property type="match status" value="1"/>
</dbReference>
<dbReference type="PANTHER" id="PTHR42698">
    <property type="entry name" value="GTPASE ERA"/>
    <property type="match status" value="1"/>
</dbReference>
<dbReference type="PANTHER" id="PTHR42698:SF1">
    <property type="entry name" value="GTPASE ERA, MITOCHONDRIAL"/>
    <property type="match status" value="1"/>
</dbReference>
<dbReference type="Pfam" id="PF07650">
    <property type="entry name" value="KH_2"/>
    <property type="match status" value="1"/>
</dbReference>
<dbReference type="Pfam" id="PF01926">
    <property type="entry name" value="MMR_HSR1"/>
    <property type="match status" value="1"/>
</dbReference>
<dbReference type="SUPFAM" id="SSF52540">
    <property type="entry name" value="P-loop containing nucleoside triphosphate hydrolases"/>
    <property type="match status" value="1"/>
</dbReference>
<dbReference type="SUPFAM" id="SSF54814">
    <property type="entry name" value="Prokaryotic type KH domain (KH-domain type II)"/>
    <property type="match status" value="1"/>
</dbReference>
<dbReference type="PROSITE" id="PS51713">
    <property type="entry name" value="G_ERA"/>
    <property type="match status" value="1"/>
</dbReference>
<dbReference type="PROSITE" id="PS50823">
    <property type="entry name" value="KH_TYPE_2"/>
    <property type="match status" value="1"/>
</dbReference>
<keyword id="KW-0997">Cell inner membrane</keyword>
<keyword id="KW-1003">Cell membrane</keyword>
<keyword id="KW-0963">Cytoplasm</keyword>
<keyword id="KW-0342">GTP-binding</keyword>
<keyword id="KW-0472">Membrane</keyword>
<keyword id="KW-0547">Nucleotide-binding</keyword>
<keyword id="KW-1185">Reference proteome</keyword>
<keyword id="KW-0690">Ribosome biogenesis</keyword>
<keyword id="KW-0694">RNA-binding</keyword>
<keyword id="KW-0699">rRNA-binding</keyword>
<proteinExistence type="inferred from homology"/>
<comment type="function">
    <text evidence="1">An essential GTPase that binds both GDP and GTP, with rapid nucleotide exchange. Plays a role in 16S rRNA processing and 30S ribosomal subunit biogenesis and possibly also in cell cycle regulation and energy metabolism.</text>
</comment>
<comment type="subunit">
    <text evidence="1">Monomer.</text>
</comment>
<comment type="subcellular location">
    <subcellularLocation>
        <location>Cytoplasm</location>
    </subcellularLocation>
    <subcellularLocation>
        <location evidence="1">Cell inner membrane</location>
        <topology evidence="1">Peripheral membrane protein</topology>
    </subcellularLocation>
</comment>
<comment type="similarity">
    <text evidence="1 2">Belongs to the TRAFAC class TrmE-Era-EngA-EngB-Septin-like GTPase superfamily. Era GTPase family.</text>
</comment>
<organism>
    <name type="scientific">Maricaulis maris (strain MCS10)</name>
    <name type="common">Caulobacter maris</name>
    <dbReference type="NCBI Taxonomy" id="394221"/>
    <lineage>
        <taxon>Bacteria</taxon>
        <taxon>Pseudomonadati</taxon>
        <taxon>Pseudomonadota</taxon>
        <taxon>Alphaproteobacteria</taxon>
        <taxon>Maricaulales</taxon>
        <taxon>Maricaulaceae</taxon>
        <taxon>Maricaulis</taxon>
    </lineage>
</organism>